<feature type="chain" id="PRO_0000340173" description="Sugar fermentation stimulation protein homolog">
    <location>
        <begin position="1"/>
        <end position="231"/>
    </location>
</feature>
<comment type="similarity">
    <text evidence="1">Belongs to the SfsA family.</text>
</comment>
<proteinExistence type="inferred from homology"/>
<evidence type="ECO:0000255" key="1">
    <source>
        <dbReference type="HAMAP-Rule" id="MF_00095"/>
    </source>
</evidence>
<organism>
    <name type="scientific">Pyrobaculum islandicum (strain DSM 4184 / JCM 9189 / GEO3)</name>
    <dbReference type="NCBI Taxonomy" id="384616"/>
    <lineage>
        <taxon>Archaea</taxon>
        <taxon>Thermoproteota</taxon>
        <taxon>Thermoprotei</taxon>
        <taxon>Thermoproteales</taxon>
        <taxon>Thermoproteaceae</taxon>
        <taxon>Pyrobaculum</taxon>
    </lineage>
</organism>
<reference key="1">
    <citation type="submission" date="2006-12" db="EMBL/GenBank/DDBJ databases">
        <title>Complete sequence of Pyrobaculum islandicum DSM 4184.</title>
        <authorList>
            <person name="Copeland A."/>
            <person name="Lucas S."/>
            <person name="Lapidus A."/>
            <person name="Barry K."/>
            <person name="Detter J.C."/>
            <person name="Glavina del Rio T."/>
            <person name="Dalin E."/>
            <person name="Tice H."/>
            <person name="Pitluck S."/>
            <person name="Meincke L."/>
            <person name="Brettin T."/>
            <person name="Bruce D."/>
            <person name="Han C."/>
            <person name="Tapia R."/>
            <person name="Gilna P."/>
            <person name="Schmutz J."/>
            <person name="Larimer F."/>
            <person name="Land M."/>
            <person name="Hauser L."/>
            <person name="Kyrpides N."/>
            <person name="Mikhailova N."/>
            <person name="Cozen A.E."/>
            <person name="Fitz-Gibbon S.T."/>
            <person name="House C.H."/>
            <person name="Saltikov C."/>
            <person name="Lowe T."/>
            <person name="Richardson P."/>
        </authorList>
    </citation>
    <scope>NUCLEOTIDE SEQUENCE [LARGE SCALE GENOMIC DNA]</scope>
    <source>
        <strain>DSM 4184 / JCM 9189 / GEO3</strain>
    </source>
</reference>
<protein>
    <recommendedName>
        <fullName evidence="1">Sugar fermentation stimulation protein homolog</fullName>
    </recommendedName>
</protein>
<accession>A1RVP3</accession>
<gene>
    <name evidence="1" type="primary">sfsA</name>
    <name type="ordered locus">Pisl_1878</name>
</gene>
<dbReference type="EMBL" id="CP000504">
    <property type="protein sequence ID" value="ABL89025.1"/>
    <property type="molecule type" value="Genomic_DNA"/>
</dbReference>
<dbReference type="RefSeq" id="WP_011763600.1">
    <property type="nucleotide sequence ID" value="NC_008701.1"/>
</dbReference>
<dbReference type="SMR" id="A1RVP3"/>
<dbReference type="GeneID" id="4617106"/>
<dbReference type="KEGG" id="pis:Pisl_1878"/>
<dbReference type="eggNOG" id="arCOG04115">
    <property type="taxonomic scope" value="Archaea"/>
</dbReference>
<dbReference type="HOGENOM" id="CLU_052299_1_0_2"/>
<dbReference type="OrthoDB" id="34139at2157"/>
<dbReference type="Proteomes" id="UP000002595">
    <property type="component" value="Chromosome"/>
</dbReference>
<dbReference type="GO" id="GO:0003677">
    <property type="term" value="F:DNA binding"/>
    <property type="evidence" value="ECO:0007669"/>
    <property type="project" value="InterPro"/>
</dbReference>
<dbReference type="Gene3D" id="2.40.50.580">
    <property type="match status" value="1"/>
</dbReference>
<dbReference type="Gene3D" id="3.40.1350.60">
    <property type="match status" value="1"/>
</dbReference>
<dbReference type="HAMAP" id="MF_00095">
    <property type="entry name" value="SfsA"/>
    <property type="match status" value="1"/>
</dbReference>
<dbReference type="InterPro" id="IPR005224">
    <property type="entry name" value="SfsA"/>
</dbReference>
<dbReference type="InterPro" id="IPR040452">
    <property type="entry name" value="SfsA_C"/>
</dbReference>
<dbReference type="InterPro" id="IPR041465">
    <property type="entry name" value="SfsA_N"/>
</dbReference>
<dbReference type="NCBIfam" id="TIGR00230">
    <property type="entry name" value="sfsA"/>
    <property type="match status" value="1"/>
</dbReference>
<dbReference type="PANTHER" id="PTHR30545">
    <property type="entry name" value="SUGAR FERMENTATION STIMULATION PROTEIN A"/>
    <property type="match status" value="1"/>
</dbReference>
<dbReference type="PANTHER" id="PTHR30545:SF2">
    <property type="entry name" value="SUGAR FERMENTATION STIMULATION PROTEIN A"/>
    <property type="match status" value="1"/>
</dbReference>
<dbReference type="Pfam" id="PF03749">
    <property type="entry name" value="SfsA"/>
    <property type="match status" value="1"/>
</dbReference>
<dbReference type="Pfam" id="PF17746">
    <property type="entry name" value="SfsA_N"/>
    <property type="match status" value="1"/>
</dbReference>
<name>SFSA_PYRIL</name>
<sequence length="231" mass="26469">MYFPIEKPDVWGIFKKRLNRFVGLAEIDGVETLVHIHDPGRLQELLFPGAMIWARRKQRGKTQYYLTAVELDDELVLIDPAAHNKVTSWLIEAGFLLRGYAIERYEPAFGKGRFDLLLRGPNGQRALVEVKGVTLEAGGRALFPDAPTSRGARHMEELAKAVTEGFEAHVIFLVFRKRAKVFSPNWEMDRKFAEALVRAYRSGVYIHAVKLEMFKWGLRYIEELPIDLLAL</sequence>